<protein>
    <recommendedName>
        <fullName evidence="2">Conotoxin reg3c</fullName>
    </recommendedName>
</protein>
<accession>P0DPJ2</accession>
<keyword id="KW-0903">Direct protein sequencing</keyword>
<keyword id="KW-1015">Disulfide bond</keyword>
<keyword id="KW-0379">Hydroxylation</keyword>
<keyword id="KW-0964">Secreted</keyword>
<keyword id="KW-0800">Toxin</keyword>
<dbReference type="GO" id="GO:0005576">
    <property type="term" value="C:extracellular region"/>
    <property type="evidence" value="ECO:0007669"/>
    <property type="project" value="UniProtKB-SubCell"/>
</dbReference>
<dbReference type="GO" id="GO:0090729">
    <property type="term" value="F:toxin activity"/>
    <property type="evidence" value="ECO:0007669"/>
    <property type="project" value="UniProtKB-KW"/>
</dbReference>
<comment type="subcellular location">
    <subcellularLocation>
        <location evidence="1">Secreted</location>
    </subcellularLocation>
</comment>
<comment type="tissue specificity">
    <text evidence="4">Expressed by the venom duct.</text>
</comment>
<comment type="domain">
    <text evidence="3">The cysteine framework is III (CC-C-C-CC). Classified in the M-3 branch, since 3 residues stand between the fourth and the fifth cysteine residues.</text>
</comment>
<comment type="PTM">
    <text evidence="1">Contains 3 disulfide bonds.</text>
</comment>
<comment type="mass spectrometry"/>
<comment type="similarity">
    <text evidence="3">Belongs to the conotoxin M superfamily.</text>
</comment>
<proteinExistence type="evidence at protein level"/>
<organism>
    <name type="scientific">Conus regius</name>
    <name type="common">Crown cone</name>
    <dbReference type="NCBI Taxonomy" id="101314"/>
    <lineage>
        <taxon>Eukaryota</taxon>
        <taxon>Metazoa</taxon>
        <taxon>Spiralia</taxon>
        <taxon>Lophotrochozoa</taxon>
        <taxon>Mollusca</taxon>
        <taxon>Gastropoda</taxon>
        <taxon>Caenogastropoda</taxon>
        <taxon>Neogastropoda</taxon>
        <taxon>Conoidea</taxon>
        <taxon>Conidae</taxon>
        <taxon>Conus</taxon>
        <taxon>Stephanoconus</taxon>
    </lineage>
</organism>
<feature type="peptide" id="PRO_0000444759" description="Conotoxin reg3c" evidence="1">
    <location>
        <begin position="1"/>
        <end position="17"/>
    </location>
</feature>
<feature type="modified residue" description="4-hydroxyproline" evidence="1">
    <location>
        <position position="5"/>
    </location>
</feature>
<feature type="modified residue" description="4-hydroxyproline" evidence="1">
    <location>
        <position position="15"/>
    </location>
</feature>
<sequence>CCAFPQWCGAGCIVPCC</sequence>
<evidence type="ECO:0000269" key="1">
    <source>
    </source>
</evidence>
<evidence type="ECO:0000303" key="2">
    <source>
    </source>
</evidence>
<evidence type="ECO:0000305" key="3"/>
<evidence type="ECO:0000305" key="4">
    <source>
    </source>
</evidence>
<reference key="1">
    <citation type="journal article" date="2017" name="FEBS J.">
        <title>Structural plasticity of Mini-M conotoxins: expression of all mini-M subtypes by Conus regius.</title>
        <authorList>
            <person name="Franco A."/>
            <person name="Dovell S."/>
            <person name="Moller C."/>
            <person name="Grandal M."/>
            <person name="Clark E."/>
            <person name="Mari F."/>
        </authorList>
    </citation>
    <scope>PROTEIN SEQUENCE</scope>
    <scope>MASS SPECTROMETRY</scope>
    <scope>SUBCELLULAR LOCATION</scope>
    <scope>HYDROXYLATION AT PRO-5 AND PRO-15</scope>
    <source>
        <tissue>Venom</tissue>
    </source>
</reference>
<name>CM3C_CONRE</name>